<sequence>MGSFSVWHWLIVLVIVLVLFGRGKIPELMGDVAKGIKSFKKGMADEDQTPPPADANANAKTVDHKADEIK</sequence>
<reference key="1">
    <citation type="journal article" date="2001" name="Science">
        <title>The genome of the natural genetic engineer Agrobacterium tumefaciens C58.</title>
        <authorList>
            <person name="Wood D.W."/>
            <person name="Setubal J.C."/>
            <person name="Kaul R."/>
            <person name="Monks D.E."/>
            <person name="Kitajima J.P."/>
            <person name="Okura V.K."/>
            <person name="Zhou Y."/>
            <person name="Chen L."/>
            <person name="Wood G.E."/>
            <person name="Almeida N.F. Jr."/>
            <person name="Woo L."/>
            <person name="Chen Y."/>
            <person name="Paulsen I.T."/>
            <person name="Eisen J.A."/>
            <person name="Karp P.D."/>
            <person name="Bovee D. Sr."/>
            <person name="Chapman P."/>
            <person name="Clendenning J."/>
            <person name="Deatherage G."/>
            <person name="Gillet W."/>
            <person name="Grant C."/>
            <person name="Kutyavin T."/>
            <person name="Levy R."/>
            <person name="Li M.-J."/>
            <person name="McClelland E."/>
            <person name="Palmieri A."/>
            <person name="Raymond C."/>
            <person name="Rouse G."/>
            <person name="Saenphimmachak C."/>
            <person name="Wu Z."/>
            <person name="Romero P."/>
            <person name="Gordon D."/>
            <person name="Zhang S."/>
            <person name="Yoo H."/>
            <person name="Tao Y."/>
            <person name="Biddle P."/>
            <person name="Jung M."/>
            <person name="Krespan W."/>
            <person name="Perry M."/>
            <person name="Gordon-Kamm B."/>
            <person name="Liao L."/>
            <person name="Kim S."/>
            <person name="Hendrick C."/>
            <person name="Zhao Z.-Y."/>
            <person name="Dolan M."/>
            <person name="Chumley F."/>
            <person name="Tingey S.V."/>
            <person name="Tomb J.-F."/>
            <person name="Gordon M.P."/>
            <person name="Olson M.V."/>
            <person name="Nester E.W."/>
        </authorList>
    </citation>
    <scope>NUCLEOTIDE SEQUENCE [LARGE SCALE GENOMIC DNA]</scope>
    <source>
        <strain>C58 / ATCC 33970</strain>
    </source>
</reference>
<reference key="2">
    <citation type="journal article" date="2001" name="Science">
        <title>Genome sequence of the plant pathogen and biotechnology agent Agrobacterium tumefaciens C58.</title>
        <authorList>
            <person name="Goodner B."/>
            <person name="Hinkle G."/>
            <person name="Gattung S."/>
            <person name="Miller N."/>
            <person name="Blanchard M."/>
            <person name="Qurollo B."/>
            <person name="Goldman B.S."/>
            <person name="Cao Y."/>
            <person name="Askenazi M."/>
            <person name="Halling C."/>
            <person name="Mullin L."/>
            <person name="Houmiel K."/>
            <person name="Gordon J."/>
            <person name="Vaudin M."/>
            <person name="Iartchouk O."/>
            <person name="Epp A."/>
            <person name="Liu F."/>
            <person name="Wollam C."/>
            <person name="Allinger M."/>
            <person name="Doughty D."/>
            <person name="Scott C."/>
            <person name="Lappas C."/>
            <person name="Markelz B."/>
            <person name="Flanagan C."/>
            <person name="Crowell C."/>
            <person name="Gurson J."/>
            <person name="Lomo C."/>
            <person name="Sear C."/>
            <person name="Strub G."/>
            <person name="Cielo C."/>
            <person name="Slater S."/>
        </authorList>
    </citation>
    <scope>NUCLEOTIDE SEQUENCE [LARGE SCALE GENOMIC DNA]</scope>
    <source>
        <strain>C58 / ATCC 33970</strain>
    </source>
</reference>
<gene>
    <name evidence="1" type="primary">tatA</name>
    <name type="ordered locus">Atu1706</name>
    <name type="ORF">AGR_C_3135</name>
</gene>
<evidence type="ECO:0000255" key="1">
    <source>
        <dbReference type="HAMAP-Rule" id="MF_00236"/>
    </source>
</evidence>
<evidence type="ECO:0000256" key="2">
    <source>
        <dbReference type="SAM" id="MobiDB-lite"/>
    </source>
</evidence>
<keyword id="KW-0997">Cell inner membrane</keyword>
<keyword id="KW-1003">Cell membrane</keyword>
<keyword id="KW-0472">Membrane</keyword>
<keyword id="KW-0653">Protein transport</keyword>
<keyword id="KW-1185">Reference proteome</keyword>
<keyword id="KW-0811">Translocation</keyword>
<keyword id="KW-0812">Transmembrane</keyword>
<keyword id="KW-1133">Transmembrane helix</keyword>
<keyword id="KW-0813">Transport</keyword>
<organism>
    <name type="scientific">Agrobacterium fabrum (strain C58 / ATCC 33970)</name>
    <name type="common">Agrobacterium tumefaciens (strain C58)</name>
    <dbReference type="NCBI Taxonomy" id="176299"/>
    <lineage>
        <taxon>Bacteria</taxon>
        <taxon>Pseudomonadati</taxon>
        <taxon>Pseudomonadota</taxon>
        <taxon>Alphaproteobacteria</taxon>
        <taxon>Hyphomicrobiales</taxon>
        <taxon>Rhizobiaceae</taxon>
        <taxon>Rhizobium/Agrobacterium group</taxon>
        <taxon>Agrobacterium</taxon>
        <taxon>Agrobacterium tumefaciens complex</taxon>
    </lineage>
</organism>
<proteinExistence type="inferred from homology"/>
<protein>
    <recommendedName>
        <fullName evidence="1">Sec-independent protein translocase protein TatA</fullName>
    </recommendedName>
</protein>
<comment type="function">
    <text evidence="1">Part of the twin-arginine translocation (Tat) system that transports large folded proteins containing a characteristic twin-arginine motif in their signal peptide across membranes. TatA could form the protein-conducting channel of the Tat system.</text>
</comment>
<comment type="subunit">
    <text evidence="1">The Tat system comprises two distinct complexes: a TatABC complex, containing multiple copies of TatA, TatB and TatC subunits, and a separate TatA complex, containing only TatA subunits. Substrates initially bind to the TatABC complex, which probably triggers association of the separate TatA complex to form the active translocon.</text>
</comment>
<comment type="subcellular location">
    <subcellularLocation>
        <location evidence="1">Cell inner membrane</location>
        <topology evidence="1">Single-pass membrane protein</topology>
    </subcellularLocation>
</comment>
<comment type="similarity">
    <text evidence="1">Belongs to the TatA/E family.</text>
</comment>
<name>TATA_AGRFC</name>
<feature type="chain" id="PRO_0000097929" description="Sec-independent protein translocase protein TatA">
    <location>
        <begin position="1"/>
        <end position="70"/>
    </location>
</feature>
<feature type="transmembrane region" description="Helical" evidence="1">
    <location>
        <begin position="1"/>
        <end position="21"/>
    </location>
</feature>
<feature type="region of interest" description="Disordered" evidence="2">
    <location>
        <begin position="42"/>
        <end position="70"/>
    </location>
</feature>
<feature type="compositionally biased region" description="Basic and acidic residues" evidence="2">
    <location>
        <begin position="61"/>
        <end position="70"/>
    </location>
</feature>
<accession>Q8UEP9</accession>
<dbReference type="EMBL" id="AE007869">
    <property type="protein sequence ID" value="AAK87479.1"/>
    <property type="molecule type" value="Genomic_DNA"/>
</dbReference>
<dbReference type="PIR" id="AD2786">
    <property type="entry name" value="AD2786"/>
</dbReference>
<dbReference type="PIR" id="F97565">
    <property type="entry name" value="F97565"/>
</dbReference>
<dbReference type="RefSeq" id="NP_354694.1">
    <property type="nucleotide sequence ID" value="NC_003062.2"/>
</dbReference>
<dbReference type="RefSeq" id="WP_006314389.1">
    <property type="nucleotide sequence ID" value="NC_003062.2"/>
</dbReference>
<dbReference type="SMR" id="Q8UEP9"/>
<dbReference type="STRING" id="176299.Atu1706"/>
<dbReference type="EnsemblBacteria" id="AAK87479">
    <property type="protein sequence ID" value="AAK87479"/>
    <property type="gene ID" value="Atu1706"/>
</dbReference>
<dbReference type="GeneID" id="1133744"/>
<dbReference type="KEGG" id="atu:Atu1706"/>
<dbReference type="PATRIC" id="fig|176299.10.peg.1720"/>
<dbReference type="eggNOG" id="COG1826">
    <property type="taxonomic scope" value="Bacteria"/>
</dbReference>
<dbReference type="HOGENOM" id="CLU_086034_5_0_5"/>
<dbReference type="OrthoDB" id="7161179at2"/>
<dbReference type="PhylomeDB" id="Q8UEP9"/>
<dbReference type="BioCyc" id="AGRO:ATU1706-MONOMER"/>
<dbReference type="Proteomes" id="UP000000813">
    <property type="component" value="Chromosome circular"/>
</dbReference>
<dbReference type="GO" id="GO:0033281">
    <property type="term" value="C:TAT protein transport complex"/>
    <property type="evidence" value="ECO:0007669"/>
    <property type="project" value="UniProtKB-UniRule"/>
</dbReference>
<dbReference type="GO" id="GO:0008320">
    <property type="term" value="F:protein transmembrane transporter activity"/>
    <property type="evidence" value="ECO:0007669"/>
    <property type="project" value="UniProtKB-UniRule"/>
</dbReference>
<dbReference type="GO" id="GO:0043953">
    <property type="term" value="P:protein transport by the Tat complex"/>
    <property type="evidence" value="ECO:0007669"/>
    <property type="project" value="UniProtKB-UniRule"/>
</dbReference>
<dbReference type="Gene3D" id="1.20.5.3310">
    <property type="match status" value="1"/>
</dbReference>
<dbReference type="HAMAP" id="MF_00236">
    <property type="entry name" value="TatA_E"/>
    <property type="match status" value="1"/>
</dbReference>
<dbReference type="InterPro" id="IPR003369">
    <property type="entry name" value="TatA/B/E"/>
</dbReference>
<dbReference type="InterPro" id="IPR006312">
    <property type="entry name" value="TatA/E"/>
</dbReference>
<dbReference type="NCBIfam" id="NF001940">
    <property type="entry name" value="PRK00720.1"/>
    <property type="match status" value="1"/>
</dbReference>
<dbReference type="NCBIfam" id="TIGR01411">
    <property type="entry name" value="tatAE"/>
    <property type="match status" value="1"/>
</dbReference>
<dbReference type="PANTHER" id="PTHR42982">
    <property type="entry name" value="SEC-INDEPENDENT PROTEIN TRANSLOCASE PROTEIN TATA"/>
    <property type="match status" value="1"/>
</dbReference>
<dbReference type="PANTHER" id="PTHR42982:SF1">
    <property type="entry name" value="SEC-INDEPENDENT PROTEIN TRANSLOCASE PROTEIN TATA"/>
    <property type="match status" value="1"/>
</dbReference>
<dbReference type="Pfam" id="PF02416">
    <property type="entry name" value="TatA_B_E"/>
    <property type="match status" value="1"/>
</dbReference>